<evidence type="ECO:0000250" key="1">
    <source>
        <dbReference type="UniProtKB" id="P02916"/>
    </source>
</evidence>
<evidence type="ECO:0000255" key="2"/>
<evidence type="ECO:0000255" key="3">
    <source>
        <dbReference type="PROSITE-ProRule" id="PRU00441"/>
    </source>
</evidence>
<evidence type="ECO:0000305" key="4"/>
<comment type="function">
    <text evidence="1">Part of the ABC transporter complex MalEFGK involved in maltose/maltodextrin import. Probably responsible for the translocation of the substrate across the membrane.</text>
</comment>
<comment type="subunit">
    <text evidence="1">The complex is composed of two ATP-binding proteins (MalK), two transmembrane proteins (MalG and MalF) and a solute-binding protein (MalE).</text>
</comment>
<comment type="subcellular location">
    <subcellularLocation>
        <location evidence="1">Cell inner membrane</location>
        <topology evidence="1">Multi-pass membrane protein</topology>
    </subcellularLocation>
</comment>
<comment type="similarity">
    <text evidence="4">Belongs to the binding-protein-dependent transport system permease family. MalFG subfamily.</text>
</comment>
<sequence length="514" mass="56865">MDVIKKKHWWQSDQLKWSVIGLLGLLVGYLVVLMYVQGEYLFAIMTLILSSAGLYIFANRKTYAWRYVYPGLAGMGLFVLFPLVCTIAIAFTNYSSTNQLTFERAQQVLMDRSYQAGKTYNFGLYPAGDEWQLALTDGETGKHYLSGAFSFGGEQKLQLKETDALPGGERANLRIITQNRLALNQITAVLPDESKVVMSSLRQFSGTRPLYTLADDGLLTNNQSGVKYRPNNDSGYYQSINADGSWGDEKLSPGYTVTIGAKNFTRVFTDEGIQKPFFAIFVWTVVFSVLTVVLTVAVGMVLACLVQWEALKGKAIYRVLLILPYAVPSFISILIFKGLFNQSFGEINMMLSALFGIKPAWFSDPNTARAMVIIVNTWLGYPYMMILCMGLLKAIPDDLYEASAMDGAGPFQNFFKITLPLLIKPLTPLMIASFAFNFNNFVLIQLLTNGGPDRLGTTTPAGYTDLLVSYTYRIAFEGGGGQDFGLAAAIATLIFLLVGALAIVNLKATRMKFD</sequence>
<protein>
    <recommendedName>
        <fullName evidence="1">Maltose/maltodextrin transport system permease protein MalF</fullName>
    </recommendedName>
</protein>
<gene>
    <name type="primary">malF</name>
    <name type="ordered locus">STY4424</name>
    <name type="ordered locus">t4134</name>
</gene>
<proteinExistence type="inferred from homology"/>
<dbReference type="EMBL" id="AL513382">
    <property type="protein sequence ID" value="CAD09212.1"/>
    <property type="molecule type" value="Genomic_DNA"/>
</dbReference>
<dbReference type="EMBL" id="AE014613">
    <property type="protein sequence ID" value="AAO71598.1"/>
    <property type="molecule type" value="Genomic_DNA"/>
</dbReference>
<dbReference type="RefSeq" id="NP_458526.1">
    <property type="nucleotide sequence ID" value="NC_003198.1"/>
</dbReference>
<dbReference type="RefSeq" id="WP_000382568.1">
    <property type="nucleotide sequence ID" value="NZ_WSUR01000027.1"/>
</dbReference>
<dbReference type="SMR" id="Q8Z1U2"/>
<dbReference type="STRING" id="220341.gene:17588256"/>
<dbReference type="KEGG" id="stt:t4134"/>
<dbReference type="KEGG" id="sty:STY4424"/>
<dbReference type="PATRIC" id="fig|220341.7.peg.4524"/>
<dbReference type="eggNOG" id="COG1175">
    <property type="taxonomic scope" value="Bacteria"/>
</dbReference>
<dbReference type="HOGENOM" id="CLU_016047_20_0_6"/>
<dbReference type="OMA" id="IITQNRQ"/>
<dbReference type="OrthoDB" id="9785347at2"/>
<dbReference type="Proteomes" id="UP000000541">
    <property type="component" value="Chromosome"/>
</dbReference>
<dbReference type="Proteomes" id="UP000002670">
    <property type="component" value="Chromosome"/>
</dbReference>
<dbReference type="GO" id="GO:1990060">
    <property type="term" value="C:maltose transport complex"/>
    <property type="evidence" value="ECO:0007669"/>
    <property type="project" value="TreeGrafter"/>
</dbReference>
<dbReference type="GO" id="GO:0015423">
    <property type="term" value="F:ABC-type maltose transporter activity"/>
    <property type="evidence" value="ECO:0007669"/>
    <property type="project" value="TreeGrafter"/>
</dbReference>
<dbReference type="GO" id="GO:0042956">
    <property type="term" value="P:maltodextrin transmembrane transport"/>
    <property type="evidence" value="ECO:0007669"/>
    <property type="project" value="TreeGrafter"/>
</dbReference>
<dbReference type="CDD" id="cd06261">
    <property type="entry name" value="TM_PBP2"/>
    <property type="match status" value="1"/>
</dbReference>
<dbReference type="FunFam" id="1.10.3720.10:FF:000030">
    <property type="entry name" value="Maltose ABC transporter permease MalF"/>
    <property type="match status" value="1"/>
</dbReference>
<dbReference type="FunFam" id="1.20.58.370:FF:000001">
    <property type="entry name" value="Maltose ABC transporter permease MalF"/>
    <property type="match status" value="1"/>
</dbReference>
<dbReference type="FunFam" id="2.40.430.10:FF:000001">
    <property type="entry name" value="Maltose ABC transporter permease MalF"/>
    <property type="match status" value="1"/>
</dbReference>
<dbReference type="Gene3D" id="2.40.430.10">
    <property type="entry name" value="D-maltodextrin-binding protein, MBP"/>
    <property type="match status" value="1"/>
</dbReference>
<dbReference type="Gene3D" id="1.20.58.370">
    <property type="entry name" value="MalF N-terminal region-like"/>
    <property type="match status" value="1"/>
</dbReference>
<dbReference type="Gene3D" id="3.10.650.10">
    <property type="entry name" value="MalF N-terminal region-like"/>
    <property type="match status" value="1"/>
</dbReference>
<dbReference type="Gene3D" id="1.10.3720.10">
    <property type="entry name" value="MetI-like"/>
    <property type="match status" value="1"/>
</dbReference>
<dbReference type="InterPro" id="IPR035277">
    <property type="entry name" value="MalF_N"/>
</dbReference>
<dbReference type="InterPro" id="IPR048464">
    <property type="entry name" value="MalF_N_TM"/>
</dbReference>
<dbReference type="InterPro" id="IPR029345">
    <property type="entry name" value="MalF_P2"/>
</dbReference>
<dbReference type="InterPro" id="IPR047103">
    <property type="entry name" value="MalF_P2_sf"/>
</dbReference>
<dbReference type="InterPro" id="IPR000515">
    <property type="entry name" value="MetI-like"/>
</dbReference>
<dbReference type="InterPro" id="IPR035906">
    <property type="entry name" value="MetI-like_sf"/>
</dbReference>
<dbReference type="NCBIfam" id="NF008232">
    <property type="entry name" value="PRK10999.1"/>
    <property type="match status" value="1"/>
</dbReference>
<dbReference type="PANTHER" id="PTHR47314">
    <property type="entry name" value="MALTOSE/MALTODEXTRIN TRANSPORT SYSTEM PERMEASE PROTEIN MALF"/>
    <property type="match status" value="1"/>
</dbReference>
<dbReference type="PANTHER" id="PTHR47314:SF1">
    <property type="entry name" value="MALTOSE_MALTODEXTRIN TRANSPORT SYSTEM PERMEASE PROTEIN MALF"/>
    <property type="match status" value="1"/>
</dbReference>
<dbReference type="Pfam" id="PF00528">
    <property type="entry name" value="BPD_transp_1"/>
    <property type="match status" value="1"/>
</dbReference>
<dbReference type="Pfam" id="PF20872">
    <property type="entry name" value="MalF_N_TM"/>
    <property type="match status" value="1"/>
</dbReference>
<dbReference type="Pfam" id="PF14785">
    <property type="entry name" value="MalF_P2"/>
    <property type="match status" value="1"/>
</dbReference>
<dbReference type="SUPFAM" id="SSF160964">
    <property type="entry name" value="MalF N-terminal region-like"/>
    <property type="match status" value="1"/>
</dbReference>
<dbReference type="SUPFAM" id="SSF161098">
    <property type="entry name" value="MetI-like"/>
    <property type="match status" value="1"/>
</dbReference>
<dbReference type="PROSITE" id="PS50928">
    <property type="entry name" value="ABC_TM1"/>
    <property type="match status" value="1"/>
</dbReference>
<keyword id="KW-0997">Cell inner membrane</keyword>
<keyword id="KW-1003">Cell membrane</keyword>
<keyword id="KW-0472">Membrane</keyword>
<keyword id="KW-0762">Sugar transport</keyword>
<keyword id="KW-0812">Transmembrane</keyword>
<keyword id="KW-1133">Transmembrane helix</keyword>
<keyword id="KW-0813">Transport</keyword>
<reference key="1">
    <citation type="journal article" date="2001" name="Nature">
        <title>Complete genome sequence of a multiple drug resistant Salmonella enterica serovar Typhi CT18.</title>
        <authorList>
            <person name="Parkhill J."/>
            <person name="Dougan G."/>
            <person name="James K.D."/>
            <person name="Thomson N.R."/>
            <person name="Pickard D."/>
            <person name="Wain J."/>
            <person name="Churcher C.M."/>
            <person name="Mungall K.L."/>
            <person name="Bentley S.D."/>
            <person name="Holden M.T.G."/>
            <person name="Sebaihia M."/>
            <person name="Baker S."/>
            <person name="Basham D."/>
            <person name="Brooks K."/>
            <person name="Chillingworth T."/>
            <person name="Connerton P."/>
            <person name="Cronin A."/>
            <person name="Davis P."/>
            <person name="Davies R.M."/>
            <person name="Dowd L."/>
            <person name="White N."/>
            <person name="Farrar J."/>
            <person name="Feltwell T."/>
            <person name="Hamlin N."/>
            <person name="Haque A."/>
            <person name="Hien T.T."/>
            <person name="Holroyd S."/>
            <person name="Jagels K."/>
            <person name="Krogh A."/>
            <person name="Larsen T.S."/>
            <person name="Leather S."/>
            <person name="Moule S."/>
            <person name="O'Gaora P."/>
            <person name="Parry C."/>
            <person name="Quail M.A."/>
            <person name="Rutherford K.M."/>
            <person name="Simmonds M."/>
            <person name="Skelton J."/>
            <person name="Stevens K."/>
            <person name="Whitehead S."/>
            <person name="Barrell B.G."/>
        </authorList>
    </citation>
    <scope>NUCLEOTIDE SEQUENCE [LARGE SCALE GENOMIC DNA]</scope>
    <source>
        <strain>CT18</strain>
    </source>
</reference>
<reference key="2">
    <citation type="journal article" date="2003" name="J. Bacteriol.">
        <title>Comparative genomics of Salmonella enterica serovar Typhi strains Ty2 and CT18.</title>
        <authorList>
            <person name="Deng W."/>
            <person name="Liou S.-R."/>
            <person name="Plunkett G. III"/>
            <person name="Mayhew G.F."/>
            <person name="Rose D.J."/>
            <person name="Burland V."/>
            <person name="Kodoyianni V."/>
            <person name="Schwartz D.C."/>
            <person name="Blattner F.R."/>
        </authorList>
    </citation>
    <scope>NUCLEOTIDE SEQUENCE [LARGE SCALE GENOMIC DNA]</scope>
    <source>
        <strain>ATCC 700931 / Ty2</strain>
    </source>
</reference>
<organism>
    <name type="scientific">Salmonella typhi</name>
    <dbReference type="NCBI Taxonomy" id="90370"/>
    <lineage>
        <taxon>Bacteria</taxon>
        <taxon>Pseudomonadati</taxon>
        <taxon>Pseudomonadota</taxon>
        <taxon>Gammaproteobacteria</taxon>
        <taxon>Enterobacterales</taxon>
        <taxon>Enterobacteriaceae</taxon>
        <taxon>Salmonella</taxon>
    </lineage>
</organism>
<feature type="chain" id="PRO_0000060073" description="Maltose/maltodextrin transport system permease protein MalF">
    <location>
        <begin position="1"/>
        <end position="514"/>
    </location>
</feature>
<feature type="topological domain" description="Cytoplasmic" evidence="2">
    <location>
        <begin position="1"/>
        <end position="16"/>
    </location>
</feature>
<feature type="transmembrane region" description="Helical" evidence="3">
    <location>
        <begin position="17"/>
        <end position="36"/>
    </location>
</feature>
<feature type="topological domain" description="Periplasmic" evidence="2">
    <location>
        <begin position="37"/>
        <end position="39"/>
    </location>
</feature>
<feature type="transmembrane region" description="Helical" evidence="3">
    <location>
        <begin position="40"/>
        <end position="57"/>
    </location>
</feature>
<feature type="topological domain" description="Cytoplasmic" evidence="2">
    <location>
        <begin position="58"/>
        <end position="69"/>
    </location>
</feature>
<feature type="transmembrane region" description="Helical" evidence="3">
    <location>
        <begin position="70"/>
        <end position="92"/>
    </location>
</feature>
<feature type="topological domain" description="Periplasmic" evidence="2">
    <location>
        <begin position="93"/>
        <end position="283"/>
    </location>
</feature>
<feature type="transmembrane region" description="Helical" evidence="3">
    <location>
        <begin position="284"/>
        <end position="306"/>
    </location>
</feature>
<feature type="topological domain" description="Cytoplasmic" evidence="2">
    <location>
        <begin position="307"/>
        <end position="318"/>
    </location>
</feature>
<feature type="transmembrane region" description="Helical" evidence="3">
    <location>
        <begin position="319"/>
        <end position="341"/>
    </location>
</feature>
<feature type="topological domain" description="Periplasmic" evidence="2">
    <location>
        <begin position="342"/>
        <end position="369"/>
    </location>
</feature>
<feature type="transmembrane region" description="Helical" evidence="3">
    <location>
        <begin position="370"/>
        <end position="392"/>
    </location>
</feature>
<feature type="topological domain" description="Cytoplasmic" evidence="2">
    <location>
        <begin position="393"/>
        <end position="412"/>
    </location>
</feature>
<feature type="transmembrane region" description="Helical" evidence="3">
    <location>
        <begin position="413"/>
        <end position="435"/>
    </location>
</feature>
<feature type="topological domain" description="Periplasmic" evidence="2">
    <location>
        <begin position="436"/>
        <end position="483"/>
    </location>
</feature>
<feature type="transmembrane region" description="Helical" evidence="3">
    <location>
        <begin position="484"/>
        <end position="506"/>
    </location>
</feature>
<feature type="topological domain" description="Cytoplasmic" evidence="2">
    <location>
        <begin position="507"/>
        <end position="514"/>
    </location>
</feature>
<feature type="domain" description="ABC transmembrane type-1" evidence="3">
    <location>
        <begin position="281"/>
        <end position="505"/>
    </location>
</feature>
<accession>Q8Z1U2</accession>
<accession>Q7C5P1</accession>
<name>MALF_SALTI</name>